<keyword id="KW-0963">Cytoplasm</keyword>
<keyword id="KW-0378">Hydrolase</keyword>
<keyword id="KW-0540">Nuclease</keyword>
<keyword id="KW-0690">Ribosome biogenesis</keyword>
<organism>
    <name type="scientific">Nitratidesulfovibrio vulgaris (strain DP4)</name>
    <name type="common">Desulfovibrio vulgaris</name>
    <dbReference type="NCBI Taxonomy" id="391774"/>
    <lineage>
        <taxon>Bacteria</taxon>
        <taxon>Pseudomonadati</taxon>
        <taxon>Thermodesulfobacteriota</taxon>
        <taxon>Desulfovibrionia</taxon>
        <taxon>Desulfovibrionales</taxon>
        <taxon>Desulfovibrionaceae</taxon>
        <taxon>Nitratidesulfovibrio</taxon>
    </lineage>
</organism>
<evidence type="ECO:0000255" key="1">
    <source>
        <dbReference type="HAMAP-Rule" id="MF_00651"/>
    </source>
</evidence>
<reference key="1">
    <citation type="journal article" date="2009" name="Environ. Microbiol.">
        <title>Contribution of mobile genetic elements to Desulfovibrio vulgaris genome plasticity.</title>
        <authorList>
            <person name="Walker C.B."/>
            <person name="Stolyar S."/>
            <person name="Chivian D."/>
            <person name="Pinel N."/>
            <person name="Gabster J.A."/>
            <person name="Dehal P.S."/>
            <person name="He Z."/>
            <person name="Yang Z.K."/>
            <person name="Yen H.C."/>
            <person name="Zhou J."/>
            <person name="Wall J.D."/>
            <person name="Hazen T.C."/>
            <person name="Arkin A.P."/>
            <person name="Stahl D.A."/>
        </authorList>
    </citation>
    <scope>NUCLEOTIDE SEQUENCE [LARGE SCALE GENOMIC DNA]</scope>
    <source>
        <strain>DP4</strain>
    </source>
</reference>
<proteinExistence type="inferred from homology"/>
<dbReference type="EC" id="3.1.-.-" evidence="1"/>
<dbReference type="EMBL" id="CP000527">
    <property type="protein sequence ID" value="ABM27330.1"/>
    <property type="molecule type" value="Genomic_DNA"/>
</dbReference>
<dbReference type="SMR" id="A1VA64"/>
<dbReference type="KEGG" id="dvl:Dvul_0307"/>
<dbReference type="HOGENOM" id="CLU_098240_2_2_7"/>
<dbReference type="Proteomes" id="UP000009173">
    <property type="component" value="Chromosome"/>
</dbReference>
<dbReference type="GO" id="GO:0005829">
    <property type="term" value="C:cytosol"/>
    <property type="evidence" value="ECO:0007669"/>
    <property type="project" value="TreeGrafter"/>
</dbReference>
<dbReference type="GO" id="GO:0004518">
    <property type="term" value="F:nuclease activity"/>
    <property type="evidence" value="ECO:0007669"/>
    <property type="project" value="UniProtKB-KW"/>
</dbReference>
<dbReference type="GO" id="GO:0000967">
    <property type="term" value="P:rRNA 5'-end processing"/>
    <property type="evidence" value="ECO:0007669"/>
    <property type="project" value="UniProtKB-UniRule"/>
</dbReference>
<dbReference type="CDD" id="cd16964">
    <property type="entry name" value="YqgF"/>
    <property type="match status" value="1"/>
</dbReference>
<dbReference type="Gene3D" id="3.30.420.140">
    <property type="entry name" value="YqgF/RNase H-like domain"/>
    <property type="match status" value="1"/>
</dbReference>
<dbReference type="HAMAP" id="MF_00651">
    <property type="entry name" value="Nuclease_YqgF"/>
    <property type="match status" value="1"/>
</dbReference>
<dbReference type="InterPro" id="IPR012337">
    <property type="entry name" value="RNaseH-like_sf"/>
</dbReference>
<dbReference type="InterPro" id="IPR005227">
    <property type="entry name" value="YqgF"/>
</dbReference>
<dbReference type="InterPro" id="IPR006641">
    <property type="entry name" value="YqgF/RNaseH-like_dom"/>
</dbReference>
<dbReference type="InterPro" id="IPR037027">
    <property type="entry name" value="YqgF/RNaseH-like_dom_sf"/>
</dbReference>
<dbReference type="NCBIfam" id="TIGR00250">
    <property type="entry name" value="RNAse_H_YqgF"/>
    <property type="match status" value="1"/>
</dbReference>
<dbReference type="PANTHER" id="PTHR33317">
    <property type="entry name" value="POLYNUCLEOTIDYL TRANSFERASE, RIBONUCLEASE H-LIKE SUPERFAMILY PROTEIN"/>
    <property type="match status" value="1"/>
</dbReference>
<dbReference type="PANTHER" id="PTHR33317:SF4">
    <property type="entry name" value="POLYNUCLEOTIDYL TRANSFERASE, RIBONUCLEASE H-LIKE SUPERFAMILY PROTEIN"/>
    <property type="match status" value="1"/>
</dbReference>
<dbReference type="Pfam" id="PF03652">
    <property type="entry name" value="RuvX"/>
    <property type="match status" value="1"/>
</dbReference>
<dbReference type="SMART" id="SM00732">
    <property type="entry name" value="YqgFc"/>
    <property type="match status" value="1"/>
</dbReference>
<dbReference type="SUPFAM" id="SSF53098">
    <property type="entry name" value="Ribonuclease H-like"/>
    <property type="match status" value="1"/>
</dbReference>
<name>YQGF_NITV4</name>
<gene>
    <name type="ordered locus">Dvul_0307</name>
</gene>
<protein>
    <recommendedName>
        <fullName evidence="1">Putative pre-16S rRNA nuclease</fullName>
        <ecNumber evidence="1">3.1.-.-</ecNumber>
    </recommendedName>
</protein>
<sequence length="142" mass="16036">MKFLGIDYGQRRTGIAVTDAGGRMAFPRRTIAMTTRDAFFVELLGMVEVECPDAFVVGLPRLPGGEETLTTRQVRNFVERLKRRTTLPVYFMPEELSSFEAEDDLRDAGLRGRRLEAVVDQQAAVRILESFLAVPEERRSLA</sequence>
<comment type="function">
    <text evidence="1">Could be a nuclease involved in processing of the 5'-end of pre-16S rRNA.</text>
</comment>
<comment type="subcellular location">
    <subcellularLocation>
        <location evidence="1">Cytoplasm</location>
    </subcellularLocation>
</comment>
<comment type="similarity">
    <text evidence="1">Belongs to the YqgF nuclease family.</text>
</comment>
<accession>A1VA64</accession>
<feature type="chain" id="PRO_1000061509" description="Putative pre-16S rRNA nuclease">
    <location>
        <begin position="1"/>
        <end position="142"/>
    </location>
</feature>